<reference key="1">
    <citation type="journal article" date="1992" name="Biochemistry">
        <title>Structural similarity of D-aminopeptidase carboxypeptidase DD and beta-lactamases.</title>
        <authorList>
            <person name="Asano Y."/>
            <person name="Kato Y."/>
            <person name="Yamada A."/>
            <person name="Kondo K."/>
        </authorList>
    </citation>
    <scope>NUCLEOTIDE SEQUENCE [GENOMIC DNA]</scope>
    <scope>MUTAGENESIS OF MET-58; CYS-61; SER-62; LYS-65 AND CYS-69</scope>
    <scope>ACTIVITY REGULATION</scope>
    <source>
        <strain>ATCC 49237 / SCRC C1-38</strain>
    </source>
</reference>
<reference key="2">
    <citation type="journal article" date="1989" name="J. Biol. Chem.">
        <title>Properties of a novel D-stereospecific aminopeptidase from Ochrobactrum anthropi.</title>
        <authorList>
            <person name="Asano Y."/>
            <person name="Nakazawa A."/>
            <person name="Kato Y."/>
            <person name="Kondo K."/>
        </authorList>
    </citation>
    <scope>PROTEIN SEQUENCE OF 2-26</scope>
    <scope>SUBUNIT</scope>
    <scope>CATALYTIC ACTIVITY</scope>
    <scope>BIOPHYSICOCHEMICAL PROPERTIES</scope>
    <source>
        <strain>ATCC 49237 / SCRC C1-38</strain>
    </source>
</reference>
<reference key="3">
    <citation type="journal article" date="2005" name="Protein Sci.">
        <title>Specificity inversion of Ochrobactrum anthropi D-aminopeptidase to a D,D-carboxypeptidase with new penicillin binding activity by directed mutagenesis.</title>
        <authorList>
            <person name="Delmarcelle M."/>
            <person name="Boursoit M.-C."/>
            <person name="Filee P."/>
            <person name="Baurin S.L."/>
            <person name="Frere J.-M."/>
            <person name="Joris B."/>
        </authorList>
    </citation>
    <scope>CATALYTIC ACTIVITY</scope>
</reference>
<reference key="4">
    <citation type="journal article" date="2000" name="Structure">
        <title>Crystal structure of a D-aminopeptidase from Ochrobactrum anthropi, a new member of the 'penicillin-recognizing enzyme' family.</title>
        <authorList>
            <person name="Bompard-Gilles C."/>
            <person name="Remaut H."/>
            <person name="Villeret V."/>
            <person name="Prange T."/>
            <person name="Fanuel L."/>
            <person name="Delmarcelle M."/>
            <person name="Joris B."/>
            <person name="Frere J.-M."/>
            <person name="Van Beeumen J."/>
        </authorList>
    </citation>
    <scope>X-RAY CRYSTALLOGRAPHY (1.9 ANGSTROMS) OF 1-520</scope>
    <scope>PROBABLE ACTIVE SITE</scope>
</reference>
<sequence length="520" mass="57392">MSKFDTSALEAFVRHIPQNYKGPGGVVAVVKDGEVVLQHAWGFADLRTRTPMTLDTRMPICSVSKQFTCAVLLDAVGEPELLDDALEAYLDKFEDERPAVRDLCNNQSGLRDYWALSVLCGADPEGVFLPAQAQSLLRRLKTTHFEPGSHYSYCNGNFRILADLIEAHTGRTLVDILSERIFAPAGMKRAELISDTALFDECTGYEGDTVRGFLPATNRIQWMGDAGICASLNDMIAWEQFIDATRDDESGLYRRLSGPQTFKDGVAAPYGFGLNLHETGGKRLTGHGGALRGWRCQRWHCADERLSTIAMFNFEGGASEVAFKLMNIALGVSSSEVSRVEADSAWFGSWLDDETGLVLSLEDAGHGRMKARFGTSPEMMDVVSANEARSAVTTIRRDGETIELVRASENLRLSMKRVKGEAKHDIIGRYHSDELDADLLLVSEGGAIYGAFEGFLGKSDMYPLYSVGSDVWLLPVQRSMDAPSPGEWKLVFRRDDKGEITGLSVGCWLARGVEYRRVQP</sequence>
<name>DAP_BRUAN</name>
<proteinExistence type="evidence at protein level"/>
<dbReference type="EC" id="3.4.11.19"/>
<dbReference type="EMBL" id="M84523">
    <property type="protein sequence ID" value="AAA25519.1"/>
    <property type="molecule type" value="Genomic_DNA"/>
</dbReference>
<dbReference type="PIR" id="A42209">
    <property type="entry name" value="A42209"/>
</dbReference>
<dbReference type="PDB" id="1EI5">
    <property type="method" value="X-ray"/>
    <property type="resolution" value="1.90 A"/>
    <property type="chains" value="A=1-520"/>
</dbReference>
<dbReference type="PDBsum" id="1EI5"/>
<dbReference type="SMR" id="Q9ZBA9"/>
<dbReference type="MEROPS" id="S12.002"/>
<dbReference type="SABIO-RK" id="Q9ZBA9"/>
<dbReference type="EvolutionaryTrace" id="Q9ZBA9"/>
<dbReference type="GO" id="GO:0004177">
    <property type="term" value="F:aminopeptidase activity"/>
    <property type="evidence" value="ECO:0007669"/>
    <property type="project" value="UniProtKB-UniRule"/>
</dbReference>
<dbReference type="GO" id="GO:0006508">
    <property type="term" value="P:proteolysis"/>
    <property type="evidence" value="ECO:0007669"/>
    <property type="project" value="UniProtKB-KW"/>
</dbReference>
<dbReference type="Gene3D" id="2.40.128.50">
    <property type="match status" value="2"/>
</dbReference>
<dbReference type="Gene3D" id="3.40.710.10">
    <property type="entry name" value="DD-peptidase/beta-lactamase superfamily"/>
    <property type="match status" value="1"/>
</dbReference>
<dbReference type="HAMAP" id="MF_01960">
    <property type="entry name" value="D_aminopeptidase"/>
    <property type="match status" value="1"/>
</dbReference>
<dbReference type="InterPro" id="IPR050491">
    <property type="entry name" value="Bact_CellWall_Synth/Modif"/>
</dbReference>
<dbReference type="InterPro" id="IPR001466">
    <property type="entry name" value="Beta-lactam-related"/>
</dbReference>
<dbReference type="InterPro" id="IPR012338">
    <property type="entry name" value="Beta-lactam/transpept-like"/>
</dbReference>
<dbReference type="InterPro" id="IPR027279">
    <property type="entry name" value="D_amino_pept/lipop_sf"/>
</dbReference>
<dbReference type="InterPro" id="IPR023645">
    <property type="entry name" value="DAP"/>
</dbReference>
<dbReference type="InterPro" id="IPR012856">
    <property type="entry name" value="DAP_B_dom"/>
</dbReference>
<dbReference type="NCBIfam" id="NF009622">
    <property type="entry name" value="PRK13128.1"/>
    <property type="match status" value="1"/>
</dbReference>
<dbReference type="PANTHER" id="PTHR46825:SF9">
    <property type="entry name" value="BETA-LACTAMASE-RELATED DOMAIN-CONTAINING PROTEIN"/>
    <property type="match status" value="1"/>
</dbReference>
<dbReference type="PANTHER" id="PTHR46825">
    <property type="entry name" value="D-ALANYL-D-ALANINE-CARBOXYPEPTIDASE/ENDOPEPTIDASE AMPH"/>
    <property type="match status" value="1"/>
</dbReference>
<dbReference type="Pfam" id="PF00144">
    <property type="entry name" value="Beta-lactamase"/>
    <property type="match status" value="1"/>
</dbReference>
<dbReference type="Pfam" id="PF07930">
    <property type="entry name" value="DAP_B"/>
    <property type="match status" value="1"/>
</dbReference>
<dbReference type="SUPFAM" id="SSF56601">
    <property type="entry name" value="beta-lactamase/transpeptidase-like"/>
    <property type="match status" value="1"/>
</dbReference>
<dbReference type="SUPFAM" id="SSF50886">
    <property type="entry name" value="D-aminopeptidase, middle and C-terminal domains"/>
    <property type="match status" value="2"/>
</dbReference>
<evidence type="ECO:0000269" key="1">
    <source>
    </source>
</evidence>
<evidence type="ECO:0000269" key="2">
    <source>
    </source>
</evidence>
<evidence type="ECO:0000269" key="3">
    <source>
    </source>
</evidence>
<evidence type="ECO:0000305" key="4"/>
<evidence type="ECO:0007829" key="5">
    <source>
        <dbReference type="PDB" id="1EI5"/>
    </source>
</evidence>
<feature type="initiator methionine" description="Removed" evidence="3">
    <location>
        <position position="1"/>
    </location>
</feature>
<feature type="chain" id="PRO_0000250696" description="D-aminopeptidase">
    <location>
        <begin position="2"/>
        <end position="520"/>
    </location>
</feature>
<feature type="region of interest" description="Important for specificity">
    <location>
        <begin position="477"/>
        <end position="487"/>
    </location>
</feature>
<feature type="active site" description="Nucleophile" evidence="4">
    <location>
        <position position="62"/>
    </location>
</feature>
<feature type="active site" description="Proton donor/acceptor" evidence="4">
    <location>
        <position position="65"/>
    </location>
</feature>
<feature type="binding site">
    <location>
        <position position="481"/>
    </location>
    <ligand>
        <name>substrate</name>
    </ligand>
</feature>
<feature type="mutagenesis site" description="No effect on enzymatic activity." evidence="1">
    <original>M</original>
    <variation>F</variation>
    <location>
        <position position="58"/>
    </location>
</feature>
<feature type="mutagenesis site" description="Alters sensitivity to p-chloromercuribenzoate." evidence="1">
    <original>C</original>
    <variation>S</variation>
    <location>
        <position position="61"/>
    </location>
</feature>
<feature type="mutagenesis site" description="Abolishes enzymatic activity." evidence="1">
    <original>S</original>
    <variation>G</variation>
    <location>
        <position position="62"/>
    </location>
</feature>
<feature type="mutagenesis site" description="Abolishes enzymatic activity." evidence="1">
    <original>K</original>
    <variation>N</variation>
    <location>
        <position position="65"/>
    </location>
</feature>
<feature type="mutagenesis site" description="No effect on enzymatic activity." evidence="1">
    <original>C</original>
    <variation>S</variation>
    <location>
        <position position="69"/>
    </location>
</feature>
<feature type="helix" evidence="5">
    <location>
        <begin position="7"/>
        <end position="14"/>
    </location>
</feature>
<feature type="helix" evidence="5">
    <location>
        <begin position="16"/>
        <end position="19"/>
    </location>
</feature>
<feature type="strand" evidence="5">
    <location>
        <begin position="22"/>
        <end position="31"/>
    </location>
</feature>
<feature type="strand" evidence="5">
    <location>
        <begin position="34"/>
        <end position="45"/>
    </location>
</feature>
<feature type="turn" evidence="5">
    <location>
        <begin position="46"/>
        <end position="49"/>
    </location>
</feature>
<feature type="helix" evidence="5">
    <location>
        <begin position="61"/>
        <end position="63"/>
    </location>
</feature>
<feature type="helix" evidence="5">
    <location>
        <begin position="64"/>
        <end position="75"/>
    </location>
</feature>
<feature type="helix" evidence="5">
    <location>
        <begin position="79"/>
        <end position="82"/>
    </location>
</feature>
<feature type="helix" evidence="5">
    <location>
        <begin position="83"/>
        <end position="89"/>
    </location>
</feature>
<feature type="turn" evidence="5">
    <location>
        <begin position="90"/>
        <end position="92"/>
    </location>
</feature>
<feature type="helix" evidence="5">
    <location>
        <begin position="100"/>
        <end position="104"/>
    </location>
</feature>
<feature type="helix" evidence="5">
    <location>
        <begin position="113"/>
        <end position="119"/>
    </location>
</feature>
<feature type="helix" evidence="5">
    <location>
        <begin position="130"/>
        <end position="138"/>
    </location>
</feature>
<feature type="helix" evidence="5">
    <location>
        <begin position="155"/>
        <end position="169"/>
    </location>
</feature>
<feature type="helix" evidence="5">
    <location>
        <begin position="173"/>
        <end position="180"/>
    </location>
</feature>
<feature type="helix" evidence="5">
    <location>
        <begin position="182"/>
        <end position="185"/>
    </location>
</feature>
<feature type="helix" evidence="5">
    <location>
        <begin position="196"/>
        <end position="198"/>
    </location>
</feature>
<feature type="strand" evidence="5">
    <location>
        <begin position="205"/>
        <end position="208"/>
    </location>
</feature>
<feature type="turn" evidence="5">
    <location>
        <begin position="209"/>
        <end position="211"/>
    </location>
</feature>
<feature type="strand" evidence="5">
    <location>
        <begin position="212"/>
        <end position="215"/>
    </location>
</feature>
<feature type="strand" evidence="5">
    <location>
        <begin position="224"/>
        <end position="226"/>
    </location>
</feature>
<feature type="strand" evidence="5">
    <location>
        <begin position="228"/>
        <end position="230"/>
    </location>
</feature>
<feature type="helix" evidence="5">
    <location>
        <begin position="232"/>
        <end position="244"/>
    </location>
</feature>
<feature type="turn" evidence="5">
    <location>
        <begin position="245"/>
        <end position="247"/>
    </location>
</feature>
<feature type="helix" evidence="5">
    <location>
        <begin position="252"/>
        <end position="256"/>
    </location>
</feature>
<feature type="strand" evidence="5">
    <location>
        <begin position="269"/>
        <end position="271"/>
    </location>
</feature>
<feature type="strand" evidence="5">
    <location>
        <begin position="274"/>
        <end position="279"/>
    </location>
</feature>
<feature type="strand" evidence="5">
    <location>
        <begin position="282"/>
        <end position="291"/>
    </location>
</feature>
<feature type="strand" evidence="5">
    <location>
        <begin position="294"/>
        <end position="301"/>
    </location>
</feature>
<feature type="helix" evidence="5">
    <location>
        <begin position="302"/>
        <end position="304"/>
    </location>
</feature>
<feature type="strand" evidence="5">
    <location>
        <begin position="306"/>
        <end position="316"/>
    </location>
</feature>
<feature type="helix" evidence="5">
    <location>
        <begin position="318"/>
        <end position="330"/>
    </location>
</feature>
<feature type="helix" evidence="5">
    <location>
        <begin position="344"/>
        <end position="346"/>
    </location>
</feature>
<feature type="strand" evidence="5">
    <location>
        <begin position="348"/>
        <end position="351"/>
    </location>
</feature>
<feature type="turn" evidence="5">
    <location>
        <begin position="353"/>
        <end position="355"/>
    </location>
</feature>
<feature type="strand" evidence="5">
    <location>
        <begin position="358"/>
        <end position="363"/>
    </location>
</feature>
<feature type="strand" evidence="5">
    <location>
        <begin position="368"/>
        <end position="372"/>
    </location>
</feature>
<feature type="strand" evidence="5">
    <location>
        <begin position="374"/>
        <end position="376"/>
    </location>
</feature>
<feature type="strand" evidence="5">
    <location>
        <begin position="378"/>
        <end position="384"/>
    </location>
</feature>
<feature type="strand" evidence="5">
    <location>
        <begin position="387"/>
        <end position="389"/>
    </location>
</feature>
<feature type="strand" evidence="5">
    <location>
        <begin position="394"/>
        <end position="398"/>
    </location>
</feature>
<feature type="strand" evidence="5">
    <location>
        <begin position="401"/>
        <end position="406"/>
    </location>
</feature>
<feature type="helix" evidence="5">
    <location>
        <begin position="407"/>
        <end position="409"/>
    </location>
</feature>
<feature type="strand" evidence="5">
    <location>
        <begin position="411"/>
        <end position="417"/>
    </location>
</feature>
<feature type="strand" evidence="5">
    <location>
        <begin position="428"/>
        <end position="432"/>
    </location>
</feature>
<feature type="turn" evidence="5">
    <location>
        <begin position="433"/>
        <end position="436"/>
    </location>
</feature>
<feature type="strand" evidence="5">
    <location>
        <begin position="437"/>
        <end position="444"/>
    </location>
</feature>
<feature type="strand" evidence="5">
    <location>
        <begin position="447"/>
        <end position="454"/>
    </location>
</feature>
<feature type="strand" evidence="5">
    <location>
        <begin position="465"/>
        <end position="468"/>
    </location>
</feature>
<feature type="strand" evidence="5">
    <location>
        <begin position="471"/>
        <end position="476"/>
    </location>
</feature>
<feature type="strand" evidence="5">
    <location>
        <begin position="480"/>
        <end position="483"/>
    </location>
</feature>
<feature type="strand" evidence="5">
    <location>
        <begin position="486"/>
        <end position="494"/>
    </location>
</feature>
<feature type="strand" evidence="5">
    <location>
        <begin position="500"/>
        <end position="507"/>
    </location>
</feature>
<feature type="strand" evidence="5">
    <location>
        <begin position="510"/>
        <end position="517"/>
    </location>
</feature>
<comment type="function">
    <text>Hydrolyzes N-terminal residues in D-amino acid-containing peptides.</text>
</comment>
<comment type="catalytic activity">
    <reaction evidence="2 3">
        <text>Release of an N-terminal D-amino acid from a peptide, Xaa-|-Yaa-, in which Xaa is preferably D-Ala, D-Ser or D-Thr. D-amino acid amides and methyl esters also are hydrolyzed, as is glycine amide.</text>
        <dbReference type="EC" id="3.4.11.19"/>
    </reaction>
</comment>
<comment type="activity regulation">
    <text evidence="1">Inhibited by beta-lactam compounds such as 6-aminopenicillic acid, 7-aminocephalosporanic acid, benzylpenicillin and ampicillin. Inhibited by p-chloromercuribenzoate.</text>
</comment>
<comment type="biophysicochemical properties">
    <absorption>
        <max evidence="3">281 nm</max>
    </absorption>
    <kinetics>
        <KM evidence="3">0.65 mM for D-alanine amide (at 30 degrees Celsius)</KM>
    </kinetics>
    <phDependence>
        <text evidence="3">Optimum pH is 8.5.</text>
    </phDependence>
    <temperatureDependence>
        <text evidence="3">Optimum temperature is 45 degrees Celsius.</text>
    </temperatureDependence>
</comment>
<comment type="subunit">
    <text evidence="3">Homodimer.</text>
</comment>
<comment type="similarity">
    <text evidence="4">Belongs to the peptidase S12 family.</text>
</comment>
<protein>
    <recommendedName>
        <fullName>D-aminopeptidase</fullName>
        <ecNumber>3.4.11.19</ecNumber>
    </recommendedName>
</protein>
<organism>
    <name type="scientific">Brucella anthropi</name>
    <name type="common">Ochrobactrum anthropi</name>
    <dbReference type="NCBI Taxonomy" id="529"/>
    <lineage>
        <taxon>Bacteria</taxon>
        <taxon>Pseudomonadati</taxon>
        <taxon>Pseudomonadota</taxon>
        <taxon>Alphaproteobacteria</taxon>
        <taxon>Hyphomicrobiales</taxon>
        <taxon>Brucellaceae</taxon>
        <taxon>Brucella/Ochrobactrum group</taxon>
        <taxon>Brucella</taxon>
    </lineage>
</organism>
<keyword id="KW-0002">3D-structure</keyword>
<keyword id="KW-0031">Aminopeptidase</keyword>
<keyword id="KW-0903">Direct protein sequencing</keyword>
<keyword id="KW-0378">Hydrolase</keyword>
<keyword id="KW-0645">Protease</keyword>
<accession>Q9ZBA9</accession>
<gene>
    <name type="primary">dap</name>
</gene>